<organism>
    <name type="scientific">Mus musculus</name>
    <name type="common">Mouse</name>
    <dbReference type="NCBI Taxonomy" id="10090"/>
    <lineage>
        <taxon>Eukaryota</taxon>
        <taxon>Metazoa</taxon>
        <taxon>Chordata</taxon>
        <taxon>Craniata</taxon>
        <taxon>Vertebrata</taxon>
        <taxon>Euteleostomi</taxon>
        <taxon>Mammalia</taxon>
        <taxon>Eutheria</taxon>
        <taxon>Euarchontoglires</taxon>
        <taxon>Glires</taxon>
        <taxon>Rodentia</taxon>
        <taxon>Myomorpha</taxon>
        <taxon>Muroidea</taxon>
        <taxon>Muridae</taxon>
        <taxon>Murinae</taxon>
        <taxon>Mus</taxon>
        <taxon>Mus</taxon>
    </lineage>
</organism>
<dbReference type="EC" id="1.-.-.-"/>
<dbReference type="EMBL" id="AK143913">
    <property type="protein sequence ID" value="BAE25599.1"/>
    <property type="molecule type" value="mRNA"/>
</dbReference>
<dbReference type="EMBL" id="AK151310">
    <property type="protein sequence ID" value="BAE30292.1"/>
    <property type="molecule type" value="mRNA"/>
</dbReference>
<dbReference type="EMBL" id="BC045198">
    <property type="protein sequence ID" value="AAH45198.1"/>
    <property type="molecule type" value="mRNA"/>
</dbReference>
<dbReference type="CCDS" id="CCDS15399.1">
    <molecule id="Q3UNZ8-1"/>
</dbReference>
<dbReference type="CCDS" id="CCDS87899.1">
    <molecule id="Q3UNZ8-2"/>
</dbReference>
<dbReference type="RefSeq" id="NP_001028456.1">
    <molecule id="Q3UNZ8-1"/>
    <property type="nucleotide sequence ID" value="NM_001033284.3"/>
</dbReference>
<dbReference type="RefSeq" id="NP_001343348.1">
    <molecule id="Q3UNZ8-2"/>
    <property type="nucleotide sequence ID" value="NM_001356419.2"/>
</dbReference>
<dbReference type="RefSeq" id="XP_017175484.1">
    <molecule id="Q3UNZ8-1"/>
    <property type="nucleotide sequence ID" value="XM_017319995.1"/>
</dbReference>
<dbReference type="RefSeq" id="XP_036019944.1">
    <molecule id="Q3UNZ8-1"/>
    <property type="nucleotide sequence ID" value="XM_036164051.1"/>
</dbReference>
<dbReference type="SMR" id="Q3UNZ8"/>
<dbReference type="BioGRID" id="230525">
    <property type="interactions" value="1"/>
</dbReference>
<dbReference type="FunCoup" id="Q3UNZ8">
    <property type="interactions" value="720"/>
</dbReference>
<dbReference type="STRING" id="10090.ENSMUSP00000044945"/>
<dbReference type="GlyConnect" id="2663">
    <property type="glycosylation" value="2 N-Linked glycans (1 site)"/>
</dbReference>
<dbReference type="GlyGen" id="Q3UNZ8">
    <property type="glycosylation" value="1 site, 1 N-linked glycan (1 site)"/>
</dbReference>
<dbReference type="iPTMnet" id="Q3UNZ8"/>
<dbReference type="PhosphoSitePlus" id="Q3UNZ8"/>
<dbReference type="SwissPalm" id="Q3UNZ8"/>
<dbReference type="jPOST" id="Q3UNZ8"/>
<dbReference type="PaxDb" id="10090-ENSMUSP00000044945"/>
<dbReference type="PeptideAtlas" id="Q3UNZ8"/>
<dbReference type="Ensembl" id="ENSMUST00000046743.11">
    <molecule id="Q3UNZ8-1"/>
    <property type="protein sequence ID" value="ENSMUSP00000044945.5"/>
    <property type="gene ID" value="ENSMUSG00000033488.12"/>
</dbReference>
<dbReference type="Ensembl" id="ENSMUST00000119891.7">
    <molecule id="Q3UNZ8-2"/>
    <property type="protein sequence ID" value="ENSMUSP00000113664.2"/>
    <property type="gene ID" value="ENSMUSG00000033488.12"/>
</dbReference>
<dbReference type="GeneID" id="226527"/>
<dbReference type="KEGG" id="mmu:226527"/>
<dbReference type="UCSC" id="uc007ddj.1">
    <molecule id="Q3UNZ8-1"/>
    <property type="organism name" value="mouse"/>
</dbReference>
<dbReference type="UCSC" id="uc007ddk.1">
    <molecule id="Q3UNZ8-2"/>
    <property type="organism name" value="mouse"/>
</dbReference>
<dbReference type="AGR" id="MGI:2448516"/>
<dbReference type="CTD" id="226527"/>
<dbReference type="MGI" id="MGI:2448516">
    <property type="gene designation" value="Cryzl2"/>
</dbReference>
<dbReference type="VEuPathDB" id="HostDB:ENSMUSG00000033488"/>
<dbReference type="eggNOG" id="KOG1198">
    <property type="taxonomic scope" value="Eukaryota"/>
</dbReference>
<dbReference type="GeneTree" id="ENSGT00940000162916"/>
<dbReference type="HOGENOM" id="CLU_026673_3_1_1"/>
<dbReference type="InParanoid" id="Q3UNZ8"/>
<dbReference type="OMA" id="CDIRGVF"/>
<dbReference type="OrthoDB" id="3509362at2759"/>
<dbReference type="PhylomeDB" id="Q3UNZ8"/>
<dbReference type="TreeFam" id="TF314255"/>
<dbReference type="BioGRID-ORCS" id="226527">
    <property type="hits" value="1 hit in 77 CRISPR screens"/>
</dbReference>
<dbReference type="ChiTaRS" id="Cryzl2">
    <property type="organism name" value="mouse"/>
</dbReference>
<dbReference type="PRO" id="PR:Q3UNZ8"/>
<dbReference type="Proteomes" id="UP000000589">
    <property type="component" value="Chromosome 1"/>
</dbReference>
<dbReference type="RNAct" id="Q3UNZ8">
    <property type="molecule type" value="protein"/>
</dbReference>
<dbReference type="Bgee" id="ENSMUSG00000033488">
    <property type="expression patterns" value="Expressed in right kidney and 153 other cell types or tissues"/>
</dbReference>
<dbReference type="ExpressionAtlas" id="Q3UNZ8">
    <property type="expression patterns" value="baseline and differential"/>
</dbReference>
<dbReference type="GO" id="GO:0005739">
    <property type="term" value="C:mitochondrion"/>
    <property type="evidence" value="ECO:0007005"/>
    <property type="project" value="MGI"/>
</dbReference>
<dbReference type="GO" id="GO:0016491">
    <property type="term" value="F:oxidoreductase activity"/>
    <property type="evidence" value="ECO:0007669"/>
    <property type="project" value="UniProtKB-KW"/>
</dbReference>
<dbReference type="CDD" id="cd08241">
    <property type="entry name" value="QOR1"/>
    <property type="match status" value="1"/>
</dbReference>
<dbReference type="Gene3D" id="3.90.180.10">
    <property type="entry name" value="Medium-chain alcohol dehydrogenases, catalytic domain"/>
    <property type="match status" value="1"/>
</dbReference>
<dbReference type="Gene3D" id="3.40.50.720">
    <property type="entry name" value="NAD(P)-binding Rossmann-like Domain"/>
    <property type="match status" value="1"/>
</dbReference>
<dbReference type="InterPro" id="IPR013149">
    <property type="entry name" value="ADH-like_C"/>
</dbReference>
<dbReference type="InterPro" id="IPR013154">
    <property type="entry name" value="ADH-like_N"/>
</dbReference>
<dbReference type="InterPro" id="IPR011032">
    <property type="entry name" value="GroES-like_sf"/>
</dbReference>
<dbReference type="InterPro" id="IPR036291">
    <property type="entry name" value="NAD(P)-bd_dom_sf"/>
</dbReference>
<dbReference type="InterPro" id="IPR020843">
    <property type="entry name" value="PKS_ER"/>
</dbReference>
<dbReference type="InterPro" id="IPR051397">
    <property type="entry name" value="Zn-ADH-like_protein"/>
</dbReference>
<dbReference type="PANTHER" id="PTHR43677:SF4">
    <property type="entry name" value="QUINONE OXIDOREDUCTASE-LIKE PROTEIN 2"/>
    <property type="match status" value="1"/>
</dbReference>
<dbReference type="PANTHER" id="PTHR43677">
    <property type="entry name" value="SHORT-CHAIN DEHYDROGENASE/REDUCTASE"/>
    <property type="match status" value="1"/>
</dbReference>
<dbReference type="Pfam" id="PF08240">
    <property type="entry name" value="ADH_N"/>
    <property type="match status" value="1"/>
</dbReference>
<dbReference type="Pfam" id="PF00107">
    <property type="entry name" value="ADH_zinc_N"/>
    <property type="match status" value="1"/>
</dbReference>
<dbReference type="SMART" id="SM00829">
    <property type="entry name" value="PKS_ER"/>
    <property type="match status" value="1"/>
</dbReference>
<dbReference type="SUPFAM" id="SSF50129">
    <property type="entry name" value="GroES-like"/>
    <property type="match status" value="1"/>
</dbReference>
<dbReference type="SUPFAM" id="SSF51735">
    <property type="entry name" value="NAD(P)-binding Rossmann-fold domains"/>
    <property type="match status" value="1"/>
</dbReference>
<keyword id="KW-0007">Acetylation</keyword>
<keyword id="KW-0025">Alternative splicing</keyword>
<keyword id="KW-0560">Oxidoreductase</keyword>
<keyword id="KW-1185">Reference proteome</keyword>
<sequence length="350" mass="37809">MAARLCTRCLPPVWLCRQAWQGQGRHYRAALCTELKQPLTIQEVAPRPVGPQEVRVDVHFCGVNFADILACRGQYQEKPPLPFTPGMEFSGAVLETGTDVSTVKKGDRVIGVSSFHAMAEQCITDQKTLWRIPENVSLQDAAVLPVSYGTAILAVDHRARIQPGETVLVTAAAGATGLAVIDVATNVFRAKVIAATGSDEKCKLAVQRGAQFSVNYSQGSLRDAVKKLAGSGGVNVAIDMVGGDVFLESLRSLAWEGRIVVLGFAGGNIASVPSNLLLLKNISAMGLYWGRYQHQDFAVFSKSMSTAMQYCQQGLIHPHTGAVFKLEKINDAFLHVMQRKSTGKVLLSLK</sequence>
<protein>
    <recommendedName>
        <fullName>Quinone oxidoreductase-like protein 2</fullName>
        <ecNumber>1.-.-.-</ecNumber>
    </recommendedName>
    <alternativeName>
        <fullName evidence="3">Zeta-crystallin homolog 2</fullName>
    </alternativeName>
</protein>
<gene>
    <name evidence="3" type="primary">Cryzl2</name>
</gene>
<proteinExistence type="evidence at protein level"/>
<name>QORL2_MOUSE</name>
<evidence type="ECO:0000303" key="1">
    <source>
    </source>
</evidence>
<evidence type="ECO:0000305" key="2"/>
<evidence type="ECO:0000312" key="3">
    <source>
        <dbReference type="MGI" id="MGI:2448516"/>
    </source>
</evidence>
<evidence type="ECO:0007744" key="4">
    <source>
    </source>
</evidence>
<evidence type="ECO:0007744" key="5">
    <source>
    </source>
</evidence>
<accession>Q3UNZ8</accession>
<accession>Q3UAM2</accession>
<reference key="1">
    <citation type="journal article" date="2005" name="Science">
        <title>The transcriptional landscape of the mammalian genome.</title>
        <authorList>
            <person name="Carninci P."/>
            <person name="Kasukawa T."/>
            <person name="Katayama S."/>
            <person name="Gough J."/>
            <person name="Frith M.C."/>
            <person name="Maeda N."/>
            <person name="Oyama R."/>
            <person name="Ravasi T."/>
            <person name="Lenhard B."/>
            <person name="Wells C."/>
            <person name="Kodzius R."/>
            <person name="Shimokawa K."/>
            <person name="Bajic V.B."/>
            <person name="Brenner S.E."/>
            <person name="Batalov S."/>
            <person name="Forrest A.R."/>
            <person name="Zavolan M."/>
            <person name="Davis M.J."/>
            <person name="Wilming L.G."/>
            <person name="Aidinis V."/>
            <person name="Allen J.E."/>
            <person name="Ambesi-Impiombato A."/>
            <person name="Apweiler R."/>
            <person name="Aturaliya R.N."/>
            <person name="Bailey T.L."/>
            <person name="Bansal M."/>
            <person name="Baxter L."/>
            <person name="Beisel K.W."/>
            <person name="Bersano T."/>
            <person name="Bono H."/>
            <person name="Chalk A.M."/>
            <person name="Chiu K.P."/>
            <person name="Choudhary V."/>
            <person name="Christoffels A."/>
            <person name="Clutterbuck D.R."/>
            <person name="Crowe M.L."/>
            <person name="Dalla E."/>
            <person name="Dalrymple B.P."/>
            <person name="de Bono B."/>
            <person name="Della Gatta G."/>
            <person name="di Bernardo D."/>
            <person name="Down T."/>
            <person name="Engstrom P."/>
            <person name="Fagiolini M."/>
            <person name="Faulkner G."/>
            <person name="Fletcher C.F."/>
            <person name="Fukushima T."/>
            <person name="Furuno M."/>
            <person name="Futaki S."/>
            <person name="Gariboldi M."/>
            <person name="Georgii-Hemming P."/>
            <person name="Gingeras T.R."/>
            <person name="Gojobori T."/>
            <person name="Green R.E."/>
            <person name="Gustincich S."/>
            <person name="Harbers M."/>
            <person name="Hayashi Y."/>
            <person name="Hensch T.K."/>
            <person name="Hirokawa N."/>
            <person name="Hill D."/>
            <person name="Huminiecki L."/>
            <person name="Iacono M."/>
            <person name="Ikeo K."/>
            <person name="Iwama A."/>
            <person name="Ishikawa T."/>
            <person name="Jakt M."/>
            <person name="Kanapin A."/>
            <person name="Katoh M."/>
            <person name="Kawasawa Y."/>
            <person name="Kelso J."/>
            <person name="Kitamura H."/>
            <person name="Kitano H."/>
            <person name="Kollias G."/>
            <person name="Krishnan S.P."/>
            <person name="Kruger A."/>
            <person name="Kummerfeld S.K."/>
            <person name="Kurochkin I.V."/>
            <person name="Lareau L.F."/>
            <person name="Lazarevic D."/>
            <person name="Lipovich L."/>
            <person name="Liu J."/>
            <person name="Liuni S."/>
            <person name="McWilliam S."/>
            <person name="Madan Babu M."/>
            <person name="Madera M."/>
            <person name="Marchionni L."/>
            <person name="Matsuda H."/>
            <person name="Matsuzawa S."/>
            <person name="Miki H."/>
            <person name="Mignone F."/>
            <person name="Miyake S."/>
            <person name="Morris K."/>
            <person name="Mottagui-Tabar S."/>
            <person name="Mulder N."/>
            <person name="Nakano N."/>
            <person name="Nakauchi H."/>
            <person name="Ng P."/>
            <person name="Nilsson R."/>
            <person name="Nishiguchi S."/>
            <person name="Nishikawa S."/>
            <person name="Nori F."/>
            <person name="Ohara O."/>
            <person name="Okazaki Y."/>
            <person name="Orlando V."/>
            <person name="Pang K.C."/>
            <person name="Pavan W.J."/>
            <person name="Pavesi G."/>
            <person name="Pesole G."/>
            <person name="Petrovsky N."/>
            <person name="Piazza S."/>
            <person name="Reed J."/>
            <person name="Reid J.F."/>
            <person name="Ring B.Z."/>
            <person name="Ringwald M."/>
            <person name="Rost B."/>
            <person name="Ruan Y."/>
            <person name="Salzberg S.L."/>
            <person name="Sandelin A."/>
            <person name="Schneider C."/>
            <person name="Schoenbach C."/>
            <person name="Sekiguchi K."/>
            <person name="Semple C.A."/>
            <person name="Seno S."/>
            <person name="Sessa L."/>
            <person name="Sheng Y."/>
            <person name="Shibata Y."/>
            <person name="Shimada H."/>
            <person name="Shimada K."/>
            <person name="Silva D."/>
            <person name="Sinclair B."/>
            <person name="Sperling S."/>
            <person name="Stupka E."/>
            <person name="Sugiura K."/>
            <person name="Sultana R."/>
            <person name="Takenaka Y."/>
            <person name="Taki K."/>
            <person name="Tammoja K."/>
            <person name="Tan S.L."/>
            <person name="Tang S."/>
            <person name="Taylor M.S."/>
            <person name="Tegner J."/>
            <person name="Teichmann S.A."/>
            <person name="Ueda H.R."/>
            <person name="van Nimwegen E."/>
            <person name="Verardo R."/>
            <person name="Wei C.L."/>
            <person name="Yagi K."/>
            <person name="Yamanishi H."/>
            <person name="Zabarovsky E."/>
            <person name="Zhu S."/>
            <person name="Zimmer A."/>
            <person name="Hide W."/>
            <person name="Bult C."/>
            <person name="Grimmond S.M."/>
            <person name="Teasdale R.D."/>
            <person name="Liu E.T."/>
            <person name="Brusic V."/>
            <person name="Quackenbush J."/>
            <person name="Wahlestedt C."/>
            <person name="Mattick J.S."/>
            <person name="Hume D.A."/>
            <person name="Kai C."/>
            <person name="Sasaki D."/>
            <person name="Tomaru Y."/>
            <person name="Fukuda S."/>
            <person name="Kanamori-Katayama M."/>
            <person name="Suzuki M."/>
            <person name="Aoki J."/>
            <person name="Arakawa T."/>
            <person name="Iida J."/>
            <person name="Imamura K."/>
            <person name="Itoh M."/>
            <person name="Kato T."/>
            <person name="Kawaji H."/>
            <person name="Kawagashira N."/>
            <person name="Kawashima T."/>
            <person name="Kojima M."/>
            <person name="Kondo S."/>
            <person name="Konno H."/>
            <person name="Nakano K."/>
            <person name="Ninomiya N."/>
            <person name="Nishio T."/>
            <person name="Okada M."/>
            <person name="Plessy C."/>
            <person name="Shibata K."/>
            <person name="Shiraki T."/>
            <person name="Suzuki S."/>
            <person name="Tagami M."/>
            <person name="Waki K."/>
            <person name="Watahiki A."/>
            <person name="Okamura-Oho Y."/>
            <person name="Suzuki H."/>
            <person name="Kawai J."/>
            <person name="Hayashizaki Y."/>
        </authorList>
    </citation>
    <scope>NUCLEOTIDE SEQUENCE [LARGE SCALE MRNA] (ISOFORMS 1 AND 2)</scope>
    <source>
        <strain>C57BL/6J</strain>
        <tissue>Bone marrow</tissue>
        <tissue>Kidney</tissue>
    </source>
</reference>
<reference key="2">
    <citation type="journal article" date="2004" name="Genome Res.">
        <title>The status, quality, and expansion of the NIH full-length cDNA project: the Mammalian Gene Collection (MGC).</title>
        <authorList>
            <consortium name="The MGC Project Team"/>
        </authorList>
    </citation>
    <scope>NUCLEOTIDE SEQUENCE [LARGE SCALE MRNA] (ISOFORM 1)</scope>
    <source>
        <strain>FVB/N</strain>
        <tissue>Kidney</tissue>
    </source>
</reference>
<reference key="3">
    <citation type="journal article" date="2010" name="Cell">
        <title>A tissue-specific atlas of mouse protein phosphorylation and expression.</title>
        <authorList>
            <person name="Huttlin E.L."/>
            <person name="Jedrychowski M.P."/>
            <person name="Elias J.E."/>
            <person name="Goswami T."/>
            <person name="Rad R."/>
            <person name="Beausoleil S.A."/>
            <person name="Villen J."/>
            <person name="Haas W."/>
            <person name="Sowa M.E."/>
            <person name="Gygi S.P."/>
        </authorList>
    </citation>
    <scope>IDENTIFICATION BY MASS SPECTROMETRY [LARGE SCALE ANALYSIS]</scope>
    <source>
        <tissue>Brain</tissue>
        <tissue>Brown adipose tissue</tissue>
        <tissue>Heart</tissue>
        <tissue>Kidney</tissue>
        <tissue>Liver</tissue>
        <tissue>Pancreas</tissue>
        <tissue>Spleen</tissue>
        <tissue>Testis</tissue>
    </source>
</reference>
<reference key="4">
    <citation type="journal article" date="2013" name="Mol. Cell">
        <title>SIRT5-mediated lysine desuccinylation impacts diverse metabolic pathways.</title>
        <authorList>
            <person name="Park J."/>
            <person name="Chen Y."/>
            <person name="Tishkoff D.X."/>
            <person name="Peng C."/>
            <person name="Tan M."/>
            <person name="Dai L."/>
            <person name="Xie Z."/>
            <person name="Zhang Y."/>
            <person name="Zwaans B.M."/>
            <person name="Skinner M.E."/>
            <person name="Lombard D.B."/>
            <person name="Zhao Y."/>
        </authorList>
    </citation>
    <scope>SUCCINYLATION [LARGE SCALE ANALYSIS] AT LYS-201</scope>
    <scope>IDENTIFICATION BY MASS SPECTROMETRY [LARGE SCALE ANALYSIS]</scope>
    <source>
        <tissue>Liver</tissue>
    </source>
</reference>
<reference key="5">
    <citation type="journal article" date="2013" name="Proc. Natl. Acad. Sci. U.S.A.">
        <title>Label-free quantitative proteomics of the lysine acetylome in mitochondria identifies substrates of SIRT3 in metabolic pathways.</title>
        <authorList>
            <person name="Rardin M.J."/>
            <person name="Newman J.C."/>
            <person name="Held J.M."/>
            <person name="Cusack M.P."/>
            <person name="Sorensen D.J."/>
            <person name="Li B."/>
            <person name="Schilling B."/>
            <person name="Mooney S.D."/>
            <person name="Kahn C.R."/>
            <person name="Verdin E."/>
            <person name="Gibson B.W."/>
        </authorList>
    </citation>
    <scope>ACETYLATION [LARGE SCALE ANALYSIS] AT LYS-36; LYS-302 AND LYS-328</scope>
    <scope>IDENTIFICATION BY MASS SPECTROMETRY [LARGE SCALE ANALYSIS]</scope>
    <source>
        <tissue>Liver</tissue>
    </source>
</reference>
<comment type="alternative products">
    <event type="alternative splicing"/>
    <isoform>
        <id>Q3UNZ8-1</id>
        <name>1</name>
        <sequence type="displayed"/>
    </isoform>
    <isoform>
        <id>Q3UNZ8-2</id>
        <name>2</name>
        <sequence type="described" ref="VSP_034229 VSP_034230"/>
    </isoform>
</comment>
<comment type="similarity">
    <text evidence="2">Belongs to the zinc-containing alcohol dehydrogenase family. Quinone oxidoreductase subfamily.</text>
</comment>
<feature type="chain" id="PRO_0000341239" description="Quinone oxidoreductase-like protein 2">
    <location>
        <begin position="1"/>
        <end position="350"/>
    </location>
</feature>
<feature type="modified residue" description="N6-acetyllysine" evidence="4">
    <location>
        <position position="36"/>
    </location>
</feature>
<feature type="modified residue" description="N6-succinyllysine" evidence="5">
    <location>
        <position position="201"/>
    </location>
</feature>
<feature type="modified residue" description="N6-acetyllysine" evidence="4">
    <location>
        <position position="302"/>
    </location>
</feature>
<feature type="modified residue" description="N6-acetyllysine" evidence="4">
    <location>
        <position position="328"/>
    </location>
</feature>
<feature type="splice variant" id="VSP_034229" description="In isoform 2." evidence="1">
    <original>ETVLVTA</original>
    <variation>STMPSFM</variation>
    <location>
        <begin position="165"/>
        <end position="171"/>
    </location>
</feature>
<feature type="splice variant" id="VSP_034230" description="In isoform 2." evidence="1">
    <location>
        <begin position="172"/>
        <end position="350"/>
    </location>
</feature>